<organism>
    <name type="scientific">Homo sapiens</name>
    <name type="common">Human</name>
    <dbReference type="NCBI Taxonomy" id="9606"/>
    <lineage>
        <taxon>Eukaryota</taxon>
        <taxon>Metazoa</taxon>
        <taxon>Chordata</taxon>
        <taxon>Craniata</taxon>
        <taxon>Vertebrata</taxon>
        <taxon>Euteleostomi</taxon>
        <taxon>Mammalia</taxon>
        <taxon>Eutheria</taxon>
        <taxon>Euarchontoglires</taxon>
        <taxon>Primates</taxon>
        <taxon>Haplorrhini</taxon>
        <taxon>Catarrhini</taxon>
        <taxon>Hominidae</taxon>
        <taxon>Homo</taxon>
    </lineage>
</organism>
<reference key="1">
    <citation type="journal article" date="2004" name="Nat. Genet.">
        <title>Complete sequencing and characterization of 21,243 full-length human cDNAs.</title>
        <authorList>
            <person name="Ota T."/>
            <person name="Suzuki Y."/>
            <person name="Nishikawa T."/>
            <person name="Otsuki T."/>
            <person name="Sugiyama T."/>
            <person name="Irie R."/>
            <person name="Wakamatsu A."/>
            <person name="Hayashi K."/>
            <person name="Sato H."/>
            <person name="Nagai K."/>
            <person name="Kimura K."/>
            <person name="Makita H."/>
            <person name="Sekine M."/>
            <person name="Obayashi M."/>
            <person name="Nishi T."/>
            <person name="Shibahara T."/>
            <person name="Tanaka T."/>
            <person name="Ishii S."/>
            <person name="Yamamoto J."/>
            <person name="Saito K."/>
            <person name="Kawai Y."/>
            <person name="Isono Y."/>
            <person name="Nakamura Y."/>
            <person name="Nagahari K."/>
            <person name="Murakami K."/>
            <person name="Yasuda T."/>
            <person name="Iwayanagi T."/>
            <person name="Wagatsuma M."/>
            <person name="Shiratori A."/>
            <person name="Sudo H."/>
            <person name="Hosoiri T."/>
            <person name="Kaku Y."/>
            <person name="Kodaira H."/>
            <person name="Kondo H."/>
            <person name="Sugawara M."/>
            <person name="Takahashi M."/>
            <person name="Kanda K."/>
            <person name="Yokoi T."/>
            <person name="Furuya T."/>
            <person name="Kikkawa E."/>
            <person name="Omura Y."/>
            <person name="Abe K."/>
            <person name="Kamihara K."/>
            <person name="Katsuta N."/>
            <person name="Sato K."/>
            <person name="Tanikawa M."/>
            <person name="Yamazaki M."/>
            <person name="Ninomiya K."/>
            <person name="Ishibashi T."/>
            <person name="Yamashita H."/>
            <person name="Murakawa K."/>
            <person name="Fujimori K."/>
            <person name="Tanai H."/>
            <person name="Kimata M."/>
            <person name="Watanabe M."/>
            <person name="Hiraoka S."/>
            <person name="Chiba Y."/>
            <person name="Ishida S."/>
            <person name="Ono Y."/>
            <person name="Takiguchi S."/>
            <person name="Watanabe S."/>
            <person name="Yosida M."/>
            <person name="Hotuta T."/>
            <person name="Kusano J."/>
            <person name="Kanehori K."/>
            <person name="Takahashi-Fujii A."/>
            <person name="Hara H."/>
            <person name="Tanase T.-O."/>
            <person name="Nomura Y."/>
            <person name="Togiya S."/>
            <person name="Komai F."/>
            <person name="Hara R."/>
            <person name="Takeuchi K."/>
            <person name="Arita M."/>
            <person name="Imose N."/>
            <person name="Musashino K."/>
            <person name="Yuuki H."/>
            <person name="Oshima A."/>
            <person name="Sasaki N."/>
            <person name="Aotsuka S."/>
            <person name="Yoshikawa Y."/>
            <person name="Matsunawa H."/>
            <person name="Ichihara T."/>
            <person name="Shiohata N."/>
            <person name="Sano S."/>
            <person name="Moriya S."/>
            <person name="Momiyama H."/>
            <person name="Satoh N."/>
            <person name="Takami S."/>
            <person name="Terashima Y."/>
            <person name="Suzuki O."/>
            <person name="Nakagawa S."/>
            <person name="Senoh A."/>
            <person name="Mizoguchi H."/>
            <person name="Goto Y."/>
            <person name="Shimizu F."/>
            <person name="Wakebe H."/>
            <person name="Hishigaki H."/>
            <person name="Watanabe T."/>
            <person name="Sugiyama A."/>
            <person name="Takemoto M."/>
            <person name="Kawakami B."/>
            <person name="Yamazaki M."/>
            <person name="Watanabe K."/>
            <person name="Kumagai A."/>
            <person name="Itakura S."/>
            <person name="Fukuzumi Y."/>
            <person name="Fujimori Y."/>
            <person name="Komiyama M."/>
            <person name="Tashiro H."/>
            <person name="Tanigami A."/>
            <person name="Fujiwara T."/>
            <person name="Ono T."/>
            <person name="Yamada K."/>
            <person name="Fujii Y."/>
            <person name="Ozaki K."/>
            <person name="Hirao M."/>
            <person name="Ohmori Y."/>
            <person name="Kawabata A."/>
            <person name="Hikiji T."/>
            <person name="Kobatake N."/>
            <person name="Inagaki H."/>
            <person name="Ikema Y."/>
            <person name="Okamoto S."/>
            <person name="Okitani R."/>
            <person name="Kawakami T."/>
            <person name="Noguchi S."/>
            <person name="Itoh T."/>
            <person name="Shigeta K."/>
            <person name="Senba T."/>
            <person name="Matsumura K."/>
            <person name="Nakajima Y."/>
            <person name="Mizuno T."/>
            <person name="Morinaga M."/>
            <person name="Sasaki M."/>
            <person name="Togashi T."/>
            <person name="Oyama M."/>
            <person name="Hata H."/>
            <person name="Watanabe M."/>
            <person name="Komatsu T."/>
            <person name="Mizushima-Sugano J."/>
            <person name="Satoh T."/>
            <person name="Shirai Y."/>
            <person name="Takahashi Y."/>
            <person name="Nakagawa K."/>
            <person name="Okumura K."/>
            <person name="Nagase T."/>
            <person name="Nomura N."/>
            <person name="Kikuchi H."/>
            <person name="Masuho Y."/>
            <person name="Yamashita R."/>
            <person name="Nakai K."/>
            <person name="Yada T."/>
            <person name="Nakamura Y."/>
            <person name="Ohara O."/>
            <person name="Isogai T."/>
            <person name="Sugano S."/>
        </authorList>
    </citation>
    <scope>NUCLEOTIDE SEQUENCE [LARGE SCALE MRNA] (ISOFORM 2)</scope>
    <source>
        <tissue>Lung</tissue>
    </source>
</reference>
<reference key="2">
    <citation type="submission" date="2005-04" db="EMBL/GenBank/DDBJ databases">
        <authorList>
            <person name="Suzuki Y."/>
            <person name="Sugano S."/>
            <person name="Totoki Y."/>
            <person name="Toyoda A."/>
            <person name="Takeda T."/>
            <person name="Sakaki Y."/>
            <person name="Tanaka A."/>
            <person name="Yokoyama S."/>
        </authorList>
    </citation>
    <scope>NUCLEOTIDE SEQUENCE [LARGE SCALE MRNA] (ISOFORM 2)</scope>
    <source>
        <tissue>Testis</tissue>
    </source>
</reference>
<reference key="3">
    <citation type="journal article" date="2003" name="Nature">
        <title>The DNA sequence and analysis of human chromosome 14.</title>
        <authorList>
            <person name="Heilig R."/>
            <person name="Eckenberg R."/>
            <person name="Petit J.-L."/>
            <person name="Fonknechten N."/>
            <person name="Da Silva C."/>
            <person name="Cattolico L."/>
            <person name="Levy M."/>
            <person name="Barbe V."/>
            <person name="De Berardinis V."/>
            <person name="Ureta-Vidal A."/>
            <person name="Pelletier E."/>
            <person name="Vico V."/>
            <person name="Anthouard V."/>
            <person name="Rowen L."/>
            <person name="Madan A."/>
            <person name="Qin S."/>
            <person name="Sun H."/>
            <person name="Du H."/>
            <person name="Pepin K."/>
            <person name="Artiguenave F."/>
            <person name="Robert C."/>
            <person name="Cruaud C."/>
            <person name="Bruels T."/>
            <person name="Jaillon O."/>
            <person name="Friedlander L."/>
            <person name="Samson G."/>
            <person name="Brottier P."/>
            <person name="Cure S."/>
            <person name="Segurens B."/>
            <person name="Aniere F."/>
            <person name="Samain S."/>
            <person name="Crespeau H."/>
            <person name="Abbasi N."/>
            <person name="Aiach N."/>
            <person name="Boscus D."/>
            <person name="Dickhoff R."/>
            <person name="Dors M."/>
            <person name="Dubois I."/>
            <person name="Friedman C."/>
            <person name="Gouyvenoux M."/>
            <person name="James R."/>
            <person name="Madan A."/>
            <person name="Mairey-Estrada B."/>
            <person name="Mangenot S."/>
            <person name="Martins N."/>
            <person name="Menard M."/>
            <person name="Oztas S."/>
            <person name="Ratcliffe A."/>
            <person name="Shaffer T."/>
            <person name="Trask B."/>
            <person name="Vacherie B."/>
            <person name="Bellemere C."/>
            <person name="Belser C."/>
            <person name="Besnard-Gonnet M."/>
            <person name="Bartol-Mavel D."/>
            <person name="Boutard M."/>
            <person name="Briez-Silla S."/>
            <person name="Combette S."/>
            <person name="Dufosse-Laurent V."/>
            <person name="Ferron C."/>
            <person name="Lechaplais C."/>
            <person name="Louesse C."/>
            <person name="Muselet D."/>
            <person name="Magdelenat G."/>
            <person name="Pateau E."/>
            <person name="Petit E."/>
            <person name="Sirvain-Trukniewicz P."/>
            <person name="Trybou A."/>
            <person name="Vega-Czarny N."/>
            <person name="Bataille E."/>
            <person name="Bluet E."/>
            <person name="Bordelais I."/>
            <person name="Dubois M."/>
            <person name="Dumont C."/>
            <person name="Guerin T."/>
            <person name="Haffray S."/>
            <person name="Hammadi R."/>
            <person name="Muanga J."/>
            <person name="Pellouin V."/>
            <person name="Robert D."/>
            <person name="Wunderle E."/>
            <person name="Gauguet G."/>
            <person name="Roy A."/>
            <person name="Sainte-Marthe L."/>
            <person name="Verdier J."/>
            <person name="Verdier-Discala C."/>
            <person name="Hillier L.W."/>
            <person name="Fulton L."/>
            <person name="McPherson J."/>
            <person name="Matsuda F."/>
            <person name="Wilson R."/>
            <person name="Scarpelli C."/>
            <person name="Gyapay G."/>
            <person name="Wincker P."/>
            <person name="Saurin W."/>
            <person name="Quetier F."/>
            <person name="Waterston R."/>
            <person name="Hood L."/>
            <person name="Weissenbach J."/>
        </authorList>
    </citation>
    <scope>NUCLEOTIDE SEQUENCE [LARGE SCALE GENOMIC DNA]</scope>
</reference>
<reference key="4">
    <citation type="journal article" date="2004" name="Genome Res.">
        <title>The status, quality, and expansion of the NIH full-length cDNA project: the Mammalian Gene Collection (MGC).</title>
        <authorList>
            <consortium name="The MGC Project Team"/>
        </authorList>
    </citation>
    <scope>NUCLEOTIDE SEQUENCE [LARGE SCALE MRNA] (ISOFORM 2)</scope>
    <source>
        <tissue>Uterus</tissue>
    </source>
</reference>
<dbReference type="EMBL" id="AK026746">
    <property type="protein sequence ID" value="BAB15541.1"/>
    <property type="status" value="ALT_FRAME"/>
    <property type="molecule type" value="mRNA"/>
</dbReference>
<dbReference type="EMBL" id="AK223359">
    <property type="protein sequence ID" value="BAD97079.1"/>
    <property type="molecule type" value="mRNA"/>
</dbReference>
<dbReference type="EMBL" id="AL049780">
    <property type="status" value="NOT_ANNOTATED_CDS"/>
    <property type="molecule type" value="Genomic_DNA"/>
</dbReference>
<dbReference type="EMBL" id="BC004259">
    <property type="protein sequence ID" value="AAH04259.1"/>
    <property type="molecule type" value="mRNA"/>
</dbReference>
<dbReference type="CCDS" id="CCDS41972.1">
    <molecule id="Q53FD0-1"/>
</dbReference>
<dbReference type="CCDS" id="CCDS45138.1">
    <molecule id="Q53FD0-2"/>
</dbReference>
<dbReference type="RefSeq" id="NP_001035895.1">
    <molecule id="Q53FD0-2"/>
    <property type="nucleotide sequence ID" value="NM_001042430.3"/>
</dbReference>
<dbReference type="RefSeq" id="NP_078919.2">
    <molecule id="Q53FD0-1"/>
    <property type="nucleotide sequence ID" value="NM_024643.4"/>
</dbReference>
<dbReference type="RefSeq" id="XP_005268119.1">
    <molecule id="Q53FD0-1"/>
    <property type="nucleotide sequence ID" value="XM_005268062.4"/>
</dbReference>
<dbReference type="RefSeq" id="XP_011535457.1">
    <molecule id="Q53FD0-1"/>
    <property type="nucleotide sequence ID" value="XM_011537155.3"/>
</dbReference>
<dbReference type="RefSeq" id="XP_011535458.1">
    <molecule id="Q53FD0-1"/>
    <property type="nucleotide sequence ID" value="XM_011537156.3"/>
</dbReference>
<dbReference type="RefSeq" id="XP_016877133.1">
    <property type="nucleotide sequence ID" value="XM_017021644.1"/>
</dbReference>
<dbReference type="RefSeq" id="XP_016877134.1">
    <property type="nucleotide sequence ID" value="XM_017021645.1"/>
</dbReference>
<dbReference type="SMR" id="Q53FD0"/>
<dbReference type="BioGRID" id="122817">
    <property type="interactions" value="102"/>
</dbReference>
<dbReference type="FunCoup" id="Q53FD0">
    <property type="interactions" value="38"/>
</dbReference>
<dbReference type="IntAct" id="Q53FD0">
    <property type="interactions" value="124"/>
</dbReference>
<dbReference type="MINT" id="Q53FD0"/>
<dbReference type="STRING" id="9606.ENSP00000435550"/>
<dbReference type="iPTMnet" id="Q53FD0"/>
<dbReference type="PhosphoSitePlus" id="Q53FD0"/>
<dbReference type="BioMuta" id="ZC2HC1C"/>
<dbReference type="DMDM" id="387912891"/>
<dbReference type="MassIVE" id="Q53FD0"/>
<dbReference type="PaxDb" id="9606-ENSP00000435550"/>
<dbReference type="PeptideAtlas" id="Q53FD0"/>
<dbReference type="ProteomicsDB" id="62464">
    <molecule id="Q53FD0-1"/>
</dbReference>
<dbReference type="ProteomicsDB" id="62465">
    <molecule id="Q53FD0-2"/>
</dbReference>
<dbReference type="Antibodypedia" id="25790">
    <property type="antibodies" value="52 antibodies from 18 providers"/>
</dbReference>
<dbReference type="DNASU" id="79696"/>
<dbReference type="Ensembl" id="ENST00000439583.2">
    <molecule id="Q53FD0-2"/>
    <property type="protein sequence ID" value="ENSP00000390606.2"/>
    <property type="gene ID" value="ENSG00000119703.15"/>
</dbReference>
<dbReference type="Ensembl" id="ENST00000524913.3">
    <molecule id="Q53FD0-1"/>
    <property type="protein sequence ID" value="ENSP00000435550.1"/>
    <property type="gene ID" value="ENSG00000119703.15"/>
</dbReference>
<dbReference type="Ensembl" id="ENST00000525046.2">
    <molecule id="Q53FD0-2"/>
    <property type="protein sequence ID" value="ENSP00000435684.2"/>
    <property type="gene ID" value="ENSG00000119703.15"/>
</dbReference>
<dbReference type="Ensembl" id="ENST00000526130.2">
    <molecule id="Q53FD0-2"/>
    <property type="protein sequence ID" value="ENSP00000437160.2"/>
    <property type="gene ID" value="ENSG00000119703.15"/>
</dbReference>
<dbReference type="Ensembl" id="ENST00000554763.2">
    <molecule id="Q53FD0-2"/>
    <property type="protein sequence ID" value="ENSP00000451195.2"/>
    <property type="gene ID" value="ENSG00000119703.15"/>
</dbReference>
<dbReference type="Ensembl" id="ENST00000673981.1">
    <molecule id="Q53FD0-2"/>
    <property type="protein sequence ID" value="ENSP00000501014.1"/>
    <property type="gene ID" value="ENSG00000119703.15"/>
</dbReference>
<dbReference type="Ensembl" id="ENST00000674017.1">
    <molecule id="Q53FD0-2"/>
    <property type="protein sequence ID" value="ENSP00000501062.1"/>
    <property type="gene ID" value="ENSG00000119703.15"/>
</dbReference>
<dbReference type="Ensembl" id="ENST00000674086.1">
    <molecule id="Q53FD0-1"/>
    <property type="protein sequence ID" value="ENSP00000501056.1"/>
    <property type="gene ID" value="ENSG00000119703.15"/>
</dbReference>
<dbReference type="Ensembl" id="ENST00000674097.1">
    <molecule id="Q53FD0-2"/>
    <property type="protein sequence ID" value="ENSP00000501052.1"/>
    <property type="gene ID" value="ENSG00000119703.15"/>
</dbReference>
<dbReference type="GeneID" id="79696"/>
<dbReference type="KEGG" id="hsa:79696"/>
<dbReference type="MANE-Select" id="ENST00000524913.3">
    <property type="protein sequence ID" value="ENSP00000435550.1"/>
    <property type="RefSeq nucleotide sequence ID" value="NM_024643.4"/>
    <property type="RefSeq protein sequence ID" value="NP_078919.2"/>
</dbReference>
<dbReference type="UCSC" id="uc001xrh.5">
    <molecule id="Q53FD0-1"/>
    <property type="organism name" value="human"/>
</dbReference>
<dbReference type="AGR" id="HGNC:20354"/>
<dbReference type="CTD" id="79696"/>
<dbReference type="DisGeNET" id="79696"/>
<dbReference type="GeneCards" id="ZC2HC1C"/>
<dbReference type="HGNC" id="HGNC:20354">
    <property type="gene designation" value="ZC2HC1C"/>
</dbReference>
<dbReference type="HPA" id="ENSG00000119703">
    <property type="expression patterns" value="Tissue enhanced (epididymis, testis)"/>
</dbReference>
<dbReference type="neXtProt" id="NX_Q53FD0"/>
<dbReference type="OpenTargets" id="ENSG00000119703"/>
<dbReference type="PharmGKB" id="PA162386996"/>
<dbReference type="VEuPathDB" id="HostDB:ENSG00000119703"/>
<dbReference type="eggNOG" id="KOG3940">
    <property type="taxonomic scope" value="Eukaryota"/>
</dbReference>
<dbReference type="GeneTree" id="ENSGT00940000160947"/>
<dbReference type="HOGENOM" id="CLU_039058_0_0_1"/>
<dbReference type="InParanoid" id="Q53FD0"/>
<dbReference type="OMA" id="WGRSQEN"/>
<dbReference type="OrthoDB" id="10255185at2759"/>
<dbReference type="PAN-GO" id="Q53FD0">
    <property type="GO annotations" value="0 GO annotations based on evolutionary models"/>
</dbReference>
<dbReference type="PhylomeDB" id="Q53FD0"/>
<dbReference type="TreeFam" id="TF319585"/>
<dbReference type="PathwayCommons" id="Q53FD0"/>
<dbReference type="SignaLink" id="Q53FD0"/>
<dbReference type="BioGRID-ORCS" id="79696">
    <property type="hits" value="3 hits in 1159 CRISPR screens"/>
</dbReference>
<dbReference type="GenomeRNAi" id="79696"/>
<dbReference type="Pharos" id="Q53FD0">
    <property type="development level" value="Tdark"/>
</dbReference>
<dbReference type="PRO" id="PR:Q53FD0"/>
<dbReference type="Proteomes" id="UP000005640">
    <property type="component" value="Chromosome 14"/>
</dbReference>
<dbReference type="RNAct" id="Q53FD0">
    <property type="molecule type" value="protein"/>
</dbReference>
<dbReference type="Bgee" id="ENSG00000119703">
    <property type="expression patterns" value="Expressed in left testis and 106 other cell types or tissues"/>
</dbReference>
<dbReference type="ExpressionAtlas" id="Q53FD0">
    <property type="expression patterns" value="baseline and differential"/>
</dbReference>
<dbReference type="GO" id="GO:0008270">
    <property type="term" value="F:zinc ion binding"/>
    <property type="evidence" value="ECO:0007669"/>
    <property type="project" value="UniProtKB-KW"/>
</dbReference>
<dbReference type="Gene3D" id="3.30.160.60">
    <property type="entry name" value="Classic Zinc Finger"/>
    <property type="match status" value="1"/>
</dbReference>
<dbReference type="InterPro" id="IPR049899">
    <property type="entry name" value="Znf_C2HC_C3H"/>
</dbReference>
<dbReference type="InterPro" id="IPR026104">
    <property type="entry name" value="ZNF_C2HC_dom_1C"/>
</dbReference>
<dbReference type="PANTHER" id="PTHR14649">
    <property type="entry name" value="ZINC FINGER C2HC DOMAIN-CONTAINING PROTEIN 1C"/>
    <property type="match status" value="1"/>
</dbReference>
<dbReference type="PANTHER" id="PTHR14649:SF1">
    <property type="entry name" value="ZINC FINGER C2HC DOMAIN-CONTAINING PROTEIN 1C"/>
    <property type="match status" value="1"/>
</dbReference>
<dbReference type="PROSITE" id="PS52027">
    <property type="entry name" value="ZF_C2HC_C3H"/>
    <property type="match status" value="1"/>
</dbReference>
<feature type="chain" id="PRO_0000089940" description="Zinc finger C2HC domain-containing protein 1C">
    <location>
        <begin position="1"/>
        <end position="456"/>
    </location>
</feature>
<feature type="zinc finger region" description="C2HC/C3H-type" evidence="2">
    <location>
        <begin position="387"/>
        <end position="416"/>
    </location>
</feature>
<feature type="region of interest" description="Disordered" evidence="3">
    <location>
        <begin position="16"/>
        <end position="46"/>
    </location>
</feature>
<feature type="region of interest" description="Disordered" evidence="3">
    <location>
        <begin position="85"/>
        <end position="113"/>
    </location>
</feature>
<feature type="region of interest" description="Disordered" evidence="3">
    <location>
        <begin position="336"/>
        <end position="388"/>
    </location>
</feature>
<feature type="coiled-coil region" evidence="1">
    <location>
        <begin position="211"/>
        <end position="265"/>
    </location>
</feature>
<feature type="compositionally biased region" description="Polar residues" evidence="3">
    <location>
        <begin position="35"/>
        <end position="46"/>
    </location>
</feature>
<feature type="compositionally biased region" description="Polar residues" evidence="3">
    <location>
        <begin position="90"/>
        <end position="102"/>
    </location>
</feature>
<feature type="compositionally biased region" description="Low complexity" evidence="3">
    <location>
        <begin position="368"/>
        <end position="382"/>
    </location>
</feature>
<feature type="binding site" evidence="2">
    <location>
        <position position="391"/>
    </location>
    <ligand>
        <name>Zn(2+)</name>
        <dbReference type="ChEBI" id="CHEBI:29105"/>
    </ligand>
</feature>
<feature type="binding site" evidence="2">
    <location>
        <position position="394"/>
    </location>
    <ligand>
        <name>Zn(2+)</name>
        <dbReference type="ChEBI" id="CHEBI:29105"/>
    </ligand>
</feature>
<feature type="binding site" evidence="2">
    <location>
        <position position="406"/>
    </location>
    <ligand>
        <name>Zn(2+)</name>
        <dbReference type="ChEBI" id="CHEBI:29105"/>
    </ligand>
</feature>
<feature type="binding site" evidence="2">
    <location>
        <position position="410"/>
    </location>
    <ligand>
        <name>Zn(2+)</name>
        <dbReference type="ChEBI" id="CHEBI:29105"/>
    </ligand>
</feature>
<feature type="splice variant" id="VSP_043105" description="In isoform 2." evidence="4 5 6">
    <location>
        <begin position="276"/>
        <end position="456"/>
    </location>
</feature>
<feature type="sequence conflict" description="In Ref. 2; BAD97079." evidence="7" ref="2">
    <original>P</original>
    <variation>L</variation>
    <location>
        <position position="72"/>
    </location>
</feature>
<sequence>MAGLQRLASHLPVGVMLPHNTTEAPGPHSAKQDSYEQGDSSQQSLKGHLRNNFQKQLLSNKELILDKVYTHPKWNTQTKARSYSYPHCTGISQQDPESDSQGQGNGLFYSSGPQSWYPKANNQDFIPFTKKRVGVDRAFPLKPMVHRKSCSTGEAGTDGDHNVYPRPPEPREFSSRNFGVRNQGNFSVVGTVLAATQAEKAVANFDRTEWVQIRRLEAAGESLEEEIRRKQILLRGKLKKTEEELRRIQTQKEQAKENENGELQKIILPRSRVKGNKSNTMYKPIFSPEFEFEEEFSRDRREDETWGRSQQNSGPFQFSDYRIQRLKRERLVASNNKIRDPVSEPSVEKFSPPSETPVGALQGSARNSSLSMAPDSSGSSGSIEEPQLGECSHCGRKFLSFRLERHSNICSRMRGSKRKVFDSSRARAKGTELEQYLNWKGPASAKAEPPQKSNWR</sequence>
<keyword id="KW-0025">Alternative splicing</keyword>
<keyword id="KW-0175">Coiled coil</keyword>
<keyword id="KW-0479">Metal-binding</keyword>
<keyword id="KW-1267">Proteomics identification</keyword>
<keyword id="KW-1185">Reference proteome</keyword>
<keyword id="KW-0862">Zinc</keyword>
<keyword id="KW-0863">Zinc-finger</keyword>
<evidence type="ECO:0000255" key="1"/>
<evidence type="ECO:0000255" key="2">
    <source>
        <dbReference type="PROSITE-ProRule" id="PRU01371"/>
    </source>
</evidence>
<evidence type="ECO:0000256" key="3">
    <source>
        <dbReference type="SAM" id="MobiDB-lite"/>
    </source>
</evidence>
<evidence type="ECO:0000303" key="4">
    <source>
    </source>
</evidence>
<evidence type="ECO:0000303" key="5">
    <source>
    </source>
</evidence>
<evidence type="ECO:0000303" key="6">
    <source ref="2"/>
</evidence>
<evidence type="ECO:0000305" key="7"/>
<gene>
    <name type="primary">ZC2HC1C</name>
    <name type="synonym">C14orf140</name>
    <name type="synonym">FAM164C</name>
</gene>
<accession>Q53FD0</accession>
<accession>E9PJQ0</accession>
<accession>Q9BTA8</accession>
<accession>Q9H5S9</accession>
<name>ZC21C_HUMAN</name>
<proteinExistence type="evidence at protein level"/>
<protein>
    <recommendedName>
        <fullName>Zinc finger C2HC domain-containing protein 1C</fullName>
    </recommendedName>
</protein>
<comment type="cofactor">
    <cofactor evidence="2">
        <name>Zn(2+)</name>
        <dbReference type="ChEBI" id="CHEBI:29105"/>
    </cofactor>
</comment>
<comment type="interaction">
    <interactant intactId="EBI-740767">
        <id>Q53FD0</id>
    </interactant>
    <interactant intactId="EBI-744695">
        <id>Q8N9N5</id>
        <label>BANP</label>
    </interactant>
    <organismsDiffer>false</organismsDiffer>
    <experiments>3</experiments>
</comment>
<comment type="interaction">
    <interactant intactId="EBI-740767">
        <id>Q53FD0</id>
    </interactant>
    <interactant intactId="EBI-741724">
        <id>Q8NA61</id>
        <label>CBY2</label>
    </interactant>
    <organismsDiffer>false</organismsDiffer>
    <experiments>3</experiments>
</comment>
<comment type="interaction">
    <interactant intactId="EBI-740767">
        <id>Q53FD0</id>
    </interactant>
    <interactant intactId="EBI-10171416">
        <id>Q96JN2-2</id>
        <label>CCDC136</label>
    </interactant>
    <organismsDiffer>false</organismsDiffer>
    <experiments>3</experiments>
</comment>
<comment type="interaction">
    <interactant intactId="EBI-740767">
        <id>Q53FD0</id>
    </interactant>
    <interactant intactId="EBI-744586">
        <id>Q9Y6C2</id>
        <label>EMILIN1</label>
    </interactant>
    <organismsDiffer>false</organismsDiffer>
    <experiments>3</experiments>
</comment>
<comment type="interaction">
    <interactant intactId="EBI-740767">
        <id>Q53FD0</id>
    </interactant>
    <interactant intactId="EBI-5661036">
        <id>A1L4K1</id>
        <label>FSD2</label>
    </interactant>
    <organismsDiffer>false</organismsDiffer>
    <experiments>3</experiments>
</comment>
<comment type="interaction">
    <interactant intactId="EBI-740767">
        <id>Q53FD0</id>
    </interactant>
    <interactant intactId="EBI-744302">
        <id>P14136</id>
        <label>GFAP</label>
    </interactant>
    <organismsDiffer>false</organismsDiffer>
    <experiments>3</experiments>
</comment>
<comment type="interaction">
    <interactant intactId="EBI-740767">
        <id>Q53FD0</id>
    </interactant>
    <interactant intactId="EBI-743290">
        <id>Q96ED9</id>
        <label>HOOK2</label>
    </interactant>
    <organismsDiffer>false</organismsDiffer>
    <experiments>3</experiments>
</comment>
<comment type="interaction">
    <interactant intactId="EBI-740767">
        <id>Q53FD0</id>
    </interactant>
    <interactant intactId="EBI-739566">
        <id>P19012</id>
        <label>KRT15</label>
    </interactant>
    <organismsDiffer>false</organismsDiffer>
    <experiments>4</experiments>
</comment>
<comment type="interaction">
    <interactant intactId="EBI-740767">
        <id>Q53FD0</id>
    </interactant>
    <interactant intactId="EBI-10171697">
        <id>Q6A162</id>
        <label>KRT40</label>
    </interactant>
    <organismsDiffer>false</organismsDiffer>
    <experiments>3</experiments>
</comment>
<comment type="interaction">
    <interactant intactId="EBI-740767">
        <id>Q53FD0</id>
    </interactant>
    <interactant intactId="EBI-10172526">
        <id>Q9UJV3-2</id>
        <label>MID2</label>
    </interactant>
    <organismsDiffer>false</organismsDiffer>
    <experiments>3</experiments>
</comment>
<comment type="interaction">
    <interactant intactId="EBI-740767">
        <id>Q53FD0</id>
    </interactant>
    <interactant intactId="EBI-742948">
        <id>Q5JR59</id>
        <label>MTUS2</label>
    </interactant>
    <organismsDiffer>false</organismsDiffer>
    <experiments>4</experiments>
</comment>
<comment type="interaction">
    <interactant intactId="EBI-740767">
        <id>Q53FD0</id>
    </interactant>
    <interactant intactId="EBI-302345">
        <id>Q8ND90</id>
        <label>PNMA1</label>
    </interactant>
    <organismsDiffer>false</organismsDiffer>
    <experiments>4</experiments>
</comment>
<comment type="interaction">
    <interactant intactId="EBI-740767">
        <id>Q53FD0</id>
    </interactant>
    <interactant intactId="EBI-913954">
        <id>Q9UJ41</id>
        <label>RABGEF1</label>
    </interactant>
    <organismsDiffer>false</organismsDiffer>
    <experiments>3</experiments>
</comment>
<comment type="interaction">
    <interactant intactId="EBI-740767">
        <id>Q53FD0</id>
    </interactant>
    <interactant intactId="EBI-476295">
        <id>P31947</id>
        <label>SFN</label>
    </interactant>
    <organismsDiffer>false</organismsDiffer>
    <experiments>3</experiments>
</comment>
<comment type="interaction">
    <interactant intactId="EBI-740767">
        <id>Q53FD0</id>
    </interactant>
    <interactant intactId="EBI-413317">
        <id>Q96R06</id>
        <label>SPAG5</label>
    </interactant>
    <organismsDiffer>false</organismsDiffer>
    <experiments>3</experiments>
</comment>
<comment type="interaction">
    <interactant intactId="EBI-740767">
        <id>Q53FD0</id>
    </interactant>
    <interactant intactId="EBI-1105213">
        <id>Q9UBB9</id>
        <label>TFIP11</label>
    </interactant>
    <organismsDiffer>false</organismsDiffer>
    <experiments>4</experiments>
</comment>
<comment type="interaction">
    <interactant intactId="EBI-740767">
        <id>Q53FD0</id>
    </interactant>
    <interactant intactId="EBI-359224">
        <id>Q13077</id>
        <label>TRAF1</label>
    </interactant>
    <organismsDiffer>false</organismsDiffer>
    <experiments>3</experiments>
</comment>
<comment type="interaction">
    <interactant intactId="EBI-740767">
        <id>Q53FD0</id>
    </interactant>
    <interactant intactId="EBI-355744">
        <id>Q12933</id>
        <label>TRAF2</label>
    </interactant>
    <organismsDiffer>false</organismsDiffer>
    <experiments>3</experiments>
</comment>
<comment type="interaction">
    <interactant intactId="EBI-740767">
        <id>Q53FD0</id>
    </interactant>
    <interactant intactId="EBI-740098">
        <id>P36406</id>
        <label>TRIM23</label>
    </interactant>
    <organismsDiffer>false</organismsDiffer>
    <experiments>3</experiments>
</comment>
<comment type="interaction">
    <interactant intactId="EBI-740767">
        <id>Q53FD0</id>
    </interactant>
    <interactant intactId="EBI-719493">
        <id>P14373</id>
        <label>TRIM27</label>
    </interactant>
    <organismsDiffer>false</organismsDiffer>
    <experiments>3</experiments>
</comment>
<comment type="interaction">
    <interactant intactId="EBI-14104088">
        <id>Q53FD0-2</id>
    </interactant>
    <interactant intactId="EBI-11976299">
        <id>Q5BKX5-3</id>
        <label>ACTMAP</label>
    </interactant>
    <organismsDiffer>false</organismsDiffer>
    <experiments>3</experiments>
</comment>
<comment type="interaction">
    <interactant intactId="EBI-14104088">
        <id>Q53FD0-2</id>
    </interactant>
    <interactant intactId="EBI-77797">
        <id>P35609</id>
        <label>ACTN2</label>
    </interactant>
    <organismsDiffer>false</organismsDiffer>
    <experiments>3</experiments>
</comment>
<comment type="interaction">
    <interactant intactId="EBI-14104088">
        <id>Q53FD0-2</id>
    </interactant>
    <interactant intactId="EBI-11954519">
        <id>Q49AR9</id>
        <label>ANKS1A</label>
    </interactant>
    <organismsDiffer>false</organismsDiffer>
    <experiments>3</experiments>
</comment>
<comment type="interaction">
    <interactant intactId="EBI-14104088">
        <id>Q53FD0-2</id>
    </interactant>
    <interactant intactId="EBI-742909">
        <id>Q9H6L4</id>
        <label>ARMC7</label>
    </interactant>
    <organismsDiffer>false</organismsDiffer>
    <experiments>3</experiments>
</comment>
<comment type="interaction">
    <interactant intactId="EBI-14104088">
        <id>Q53FD0-2</id>
    </interactant>
    <interactant intactId="EBI-11975051">
        <id>Q8TD16-2</id>
        <label>BICD2</label>
    </interactant>
    <organismsDiffer>false</organismsDiffer>
    <experiments>3</experiments>
</comment>
<comment type="interaction">
    <interactant intactId="EBI-14104088">
        <id>Q53FD0-2</id>
    </interactant>
    <interactant intactId="EBI-358049">
        <id>Q13895</id>
        <label>BYSL</label>
    </interactant>
    <organismsDiffer>false</organismsDiffer>
    <experiments>3</experiments>
</comment>
<comment type="interaction">
    <interactant intactId="EBI-14104088">
        <id>Q53FD0-2</id>
    </interactant>
    <interactant intactId="EBI-10311131">
        <id>Q9NP86</id>
        <label>CABP5</label>
    </interactant>
    <organismsDiffer>false</organismsDiffer>
    <experiments>3</experiments>
</comment>
<comment type="interaction">
    <interactant intactId="EBI-14104088">
        <id>Q53FD0-2</id>
    </interactant>
    <interactant intactId="EBI-11530605">
        <id>Q9H257-2</id>
        <label>CARD9</label>
    </interactant>
    <organismsDiffer>false</organismsDiffer>
    <experiments>3</experiments>
</comment>
<comment type="interaction">
    <interactant intactId="EBI-14104088">
        <id>Q53FD0-2</id>
    </interactant>
    <interactant intactId="EBI-718729">
        <id>P55212</id>
        <label>CASP6</label>
    </interactant>
    <organismsDiffer>false</organismsDiffer>
    <experiments>3</experiments>
</comment>
<comment type="interaction">
    <interactant intactId="EBI-14104088">
        <id>Q53FD0-2</id>
    </interactant>
    <interactant intactId="EBI-10171570">
        <id>Q68D86</id>
        <label>CCDC102B</label>
    </interactant>
    <organismsDiffer>false</organismsDiffer>
    <experiments>6</experiments>
</comment>
<comment type="interaction">
    <interactant intactId="EBI-14104088">
        <id>Q53FD0-2</id>
    </interactant>
    <interactant intactId="EBI-10961624">
        <id>Q2TAC2-2</id>
        <label>CCDC57</label>
    </interactant>
    <organismsDiffer>false</organismsDiffer>
    <experiments>3</experiments>
</comment>
<comment type="interaction">
    <interactant intactId="EBI-14104088">
        <id>Q53FD0-2</id>
    </interactant>
    <interactant intactId="EBI-347573">
        <id>A6NC98</id>
        <label>CCDC88B</label>
    </interactant>
    <organismsDiffer>false</organismsDiffer>
    <experiments>3</experiments>
</comment>
<comment type="interaction">
    <interactant intactId="EBI-14104088">
        <id>Q53FD0-2</id>
    </interactant>
    <interactant intactId="EBI-6624398">
        <id>P06307</id>
        <label>CCK</label>
    </interactant>
    <organismsDiffer>false</organismsDiffer>
    <experiments>3</experiments>
</comment>
<comment type="interaction">
    <interactant intactId="EBI-14104088">
        <id>Q53FD0-2</id>
    </interactant>
    <interactant intactId="EBI-25837549">
        <id>P28329-3</id>
        <label>CHAT</label>
    </interactant>
    <organismsDiffer>false</organismsDiffer>
    <experiments>3</experiments>
</comment>
<comment type="interaction">
    <interactant intactId="EBI-14104088">
        <id>Q53FD0-2</id>
    </interactant>
    <interactant intactId="EBI-10292696">
        <id>Q96Q77</id>
        <label>CIB3</label>
    </interactant>
    <organismsDiffer>false</organismsDiffer>
    <experiments>3</experiments>
</comment>
<comment type="interaction">
    <interactant intactId="EBI-14104088">
        <id>Q53FD0-2</id>
    </interactant>
    <interactant intactId="EBI-10192241">
        <id>O95833</id>
        <label>CLIC3</label>
    </interactant>
    <organismsDiffer>false</organismsDiffer>
    <experiments>3</experiments>
</comment>
<comment type="interaction">
    <interactant intactId="EBI-14104088">
        <id>Q53FD0-2</id>
    </interactant>
    <interactant intactId="EBI-739773">
        <id>Q9BSW2</id>
        <label>CRACR2A</label>
    </interactant>
    <organismsDiffer>false</organismsDiffer>
    <experiments>3</experiments>
</comment>
<comment type="interaction">
    <interactant intactId="EBI-14104088">
        <id>Q53FD0-2</id>
    </interactant>
    <interactant intactId="EBI-351257">
        <id>P26196</id>
        <label>DDX6</label>
    </interactant>
    <organismsDiffer>false</organismsDiffer>
    <experiments>3</experiments>
</comment>
<comment type="interaction">
    <interactant intactId="EBI-14104088">
        <id>Q53FD0-2</id>
    </interactant>
    <interactant intactId="EBI-750300">
        <id>Q01658</id>
        <label>DR1</label>
    </interactant>
    <organismsDiffer>false</organismsDiffer>
    <experiments>3</experiments>
</comment>
<comment type="interaction">
    <interactant intactId="EBI-14104088">
        <id>Q53FD0-2</id>
    </interactant>
    <interactant intactId="EBI-11748557">
        <id>Q9Y6C2-2</id>
        <label>EMILIN1</label>
    </interactant>
    <organismsDiffer>false</organismsDiffer>
    <experiments>3</experiments>
</comment>
<comment type="interaction">
    <interactant intactId="EBI-14104088">
        <id>Q53FD0-2</id>
    </interactant>
    <interactant intactId="EBI-744099">
        <id>Q9H0I2</id>
        <label>ENKD1</label>
    </interactant>
    <organismsDiffer>false</organismsDiffer>
    <experiments>3</experiments>
</comment>
<comment type="interaction">
    <interactant intactId="EBI-14104088">
        <id>Q53FD0-2</id>
    </interactant>
    <interactant intactId="EBI-6658203">
        <id>Q86YD7</id>
        <label>FAM90A1</label>
    </interactant>
    <organismsDiffer>false</organismsDiffer>
    <experiments>3</experiments>
</comment>
<comment type="interaction">
    <interactant intactId="EBI-14104088">
        <id>Q53FD0-2</id>
    </interactant>
    <interactant intactId="EBI-12377025">
        <id>Q9NVK5-3</id>
        <label>FGFR1OP2</label>
    </interactant>
    <organismsDiffer>false</organismsDiffer>
    <experiments>3</experiments>
</comment>
<comment type="interaction">
    <interactant intactId="EBI-14104088">
        <id>Q53FD0-2</id>
    </interactant>
    <interactant intactId="EBI-348399">
        <id>P22607</id>
        <label>FGFR3</label>
    </interactant>
    <organismsDiffer>false</organismsDiffer>
    <experiments>3</experiments>
</comment>
<comment type="interaction">
    <interactant intactId="EBI-14104088">
        <id>Q53FD0-2</id>
    </interactant>
    <interactant intactId="EBI-744302">
        <id>P14136</id>
        <label>GFAP</label>
    </interactant>
    <organismsDiffer>false</organismsDiffer>
    <experiments>3</experiments>
</comment>
<comment type="interaction">
    <interactant intactId="EBI-14104088">
        <id>Q53FD0-2</id>
    </interactant>
    <interactant intactId="EBI-6164177">
        <id>Q92805</id>
        <label>GOLGA1</label>
    </interactant>
    <organismsDiffer>false</organismsDiffer>
    <experiments>3</experiments>
</comment>
<comment type="interaction">
    <interactant intactId="EBI-14104088">
        <id>Q53FD0-2</id>
    </interactant>
    <interactant intactId="EBI-618309">
        <id>Q08379</id>
        <label>GOLGA2</label>
    </interactant>
    <organismsDiffer>false</organismsDiffer>
    <experiments>3</experiments>
</comment>
<comment type="interaction">
    <interactant intactId="EBI-14104088">
        <id>Q53FD0-2</id>
    </interactant>
    <interactant intactId="EBI-11163335">
        <id>Q9NYA3</id>
        <label>GOLGA6A</label>
    </interactant>
    <organismsDiffer>false</organismsDiffer>
    <experiments>3</experiments>
</comment>
<comment type="interaction">
    <interactant intactId="EBI-14104088">
        <id>Q53FD0-2</id>
    </interactant>
    <interactant intactId="EBI-473189">
        <id>Q96D09</id>
        <label>GPRASP2</label>
    </interactant>
    <organismsDiffer>false</organismsDiffer>
    <experiments>3</experiments>
</comment>
<comment type="interaction">
    <interactant intactId="EBI-14104088">
        <id>Q53FD0-2</id>
    </interactant>
    <interactant intactId="EBI-8285963">
        <id>Q14957</id>
        <label>GRIN2C</label>
    </interactant>
    <organismsDiffer>false</organismsDiffer>
    <experiments>3</experiments>
</comment>
<comment type="interaction">
    <interactant intactId="EBI-14104088">
        <id>Q53FD0-2</id>
    </interactant>
    <interactant intactId="EBI-1054873">
        <id>Q9Y5Q9</id>
        <label>GTF3C3</label>
    </interactant>
    <organismsDiffer>false</organismsDiffer>
    <experiments>3</experiments>
</comment>
<comment type="interaction">
    <interactant intactId="EBI-14104088">
        <id>Q53FD0-2</id>
    </interactant>
    <interactant intactId="EBI-473886">
        <id>O00291</id>
        <label>HIP1</label>
    </interactant>
    <organismsDiffer>false</organismsDiffer>
    <experiments>3</experiments>
</comment>
<comment type="interaction">
    <interactant intactId="EBI-14104088">
        <id>Q53FD0-2</id>
    </interactant>
    <interactant intactId="EBI-8561769">
        <id>Q5SUL5</id>
        <label>HLA-A</label>
    </interactant>
    <organismsDiffer>false</organismsDiffer>
    <experiments>3</experiments>
</comment>
<comment type="interaction">
    <interactant intactId="EBI-14104088">
        <id>Q53FD0-2</id>
    </interactant>
    <interactant intactId="EBI-712096">
        <id>P30519</id>
        <label>HMOX2</label>
    </interactant>
    <organismsDiffer>false</organismsDiffer>
    <experiments>3</experiments>
</comment>
<comment type="interaction">
    <interactant intactId="EBI-14104088">
        <id>Q53FD0-2</id>
    </interactant>
    <interactant intactId="EBI-10961706">
        <id>Q96ED9-2</id>
        <label>HOOK2</label>
    </interactant>
    <organismsDiffer>false</organismsDiffer>
    <experiments>3</experiments>
</comment>
<comment type="interaction">
    <interactant intactId="EBI-14104088">
        <id>Q53FD0-2</id>
    </interactant>
    <interactant intactId="EBI-7116203">
        <id>O75031</id>
        <label>HSF2BP</label>
    </interactant>
    <organismsDiffer>false</organismsDiffer>
    <experiments>3</experiments>
</comment>
<comment type="interaction">
    <interactant intactId="EBI-14104088">
        <id>Q53FD0-2</id>
    </interactant>
    <interactant intactId="EBI-466029">
        <id>P42858</id>
        <label>HTT</label>
    </interactant>
    <organismsDiffer>false</organismsDiffer>
    <experiments>3</experiments>
</comment>
<comment type="interaction">
    <interactant intactId="EBI-14104088">
        <id>Q53FD0-2</id>
    </interactant>
    <interactant intactId="EBI-1055254">
        <id>Q8WXH2</id>
        <label>JPH3</label>
    </interactant>
    <organismsDiffer>false</organismsDiffer>
    <experiments>3</experiments>
</comment>
<comment type="interaction">
    <interactant intactId="EBI-14104088">
        <id>Q53FD0-2</id>
    </interactant>
    <interactant intactId="EBI-749265">
        <id>Q8N6L0</id>
        <label>KASH5</label>
    </interactant>
    <organismsDiffer>false</organismsDiffer>
    <experiments>3</experiments>
</comment>
<comment type="interaction">
    <interactant intactId="EBI-14104088">
        <id>Q53FD0-2</id>
    </interactant>
    <interactant intactId="EBI-399080">
        <id>Q92993</id>
        <label>KAT5</label>
    </interactant>
    <organismsDiffer>false</organismsDiffer>
    <experiments>6</experiments>
</comment>
<comment type="interaction">
    <interactant intactId="EBI-14104088">
        <id>Q53FD0-2</id>
    </interactant>
    <interactant intactId="EBI-715394">
        <id>Q9H079</id>
        <label>KATNBL1</label>
    </interactant>
    <organismsDiffer>false</organismsDiffer>
    <experiments>3</experiments>
</comment>
<comment type="interaction">
    <interactant intactId="EBI-14104088">
        <id>Q53FD0-2</id>
    </interactant>
    <interactant intactId="EBI-10975473">
        <id>O60333-2</id>
        <label>KIF1B</label>
    </interactant>
    <organismsDiffer>false</organismsDiffer>
    <experiments>3</experiments>
</comment>
<comment type="interaction">
    <interactant intactId="EBI-14104088">
        <id>Q53FD0-2</id>
    </interactant>
    <interactant intactId="EBI-8472129">
        <id>Q9HAQ2</id>
        <label>KIF9</label>
    </interactant>
    <organismsDiffer>false</organismsDiffer>
    <experiments>3</experiments>
</comment>
<comment type="interaction">
    <interactant intactId="EBI-14104088">
        <id>Q53FD0-2</id>
    </interactant>
    <interactant intactId="EBI-739566">
        <id>P19012</id>
        <label>KRT15</label>
    </interactant>
    <organismsDiffer>false</organismsDiffer>
    <experiments>3</experiments>
</comment>
<comment type="interaction">
    <interactant intactId="EBI-14104088">
        <id>Q53FD0-2</id>
    </interactant>
    <interactant intactId="EBI-21591415">
        <id>P13473-2</id>
        <label>LAMP2</label>
    </interactant>
    <organismsDiffer>false</organismsDiffer>
    <experiments>3</experiments>
</comment>
<comment type="interaction">
    <interactant intactId="EBI-14104088">
        <id>Q53FD0-2</id>
    </interactant>
    <interactant intactId="EBI-2830427">
        <id>Q03252</id>
        <label>LMNB2</label>
    </interactant>
    <organismsDiffer>false</organismsDiffer>
    <experiments>3</experiments>
</comment>
<comment type="interaction">
    <interactant intactId="EBI-14104088">
        <id>Q53FD0-2</id>
    </interactant>
    <interactant intactId="EBI-11742507">
        <id>Q8TAP4-4</id>
        <label>LMO3</label>
    </interactant>
    <organismsDiffer>false</organismsDiffer>
    <experiments>3</experiments>
</comment>
<comment type="interaction">
    <interactant intactId="EBI-14104088">
        <id>Q53FD0-2</id>
    </interactant>
    <interactant intactId="EBI-741037">
        <id>Q9BRK4</id>
        <label>LZTS2</label>
    </interactant>
    <organismsDiffer>false</organismsDiffer>
    <experiments>3</experiments>
</comment>
<comment type="interaction">
    <interactant intactId="EBI-14104088">
        <id>Q53FD0-2</id>
    </interactant>
    <interactant intactId="EBI-713568">
        <id>P45984</id>
        <label>MAPK9</label>
    </interactant>
    <organismsDiffer>false</organismsDiffer>
    <experiments>3</experiments>
</comment>
<comment type="interaction">
    <interactant intactId="EBI-14104088">
        <id>Q53FD0-2</id>
    </interactant>
    <interactant intactId="EBI-726739">
        <id>Q9UPY8</id>
        <label>MAPRE3</label>
    </interactant>
    <organismsDiffer>false</organismsDiffer>
    <experiments>3</experiments>
</comment>
<comment type="interaction">
    <interactant intactId="EBI-14104088">
        <id>Q53FD0-2</id>
    </interactant>
    <interactant intactId="EBI-10963850">
        <id>Q9NZQ3-3</id>
        <label>NCKIPSD</label>
    </interactant>
    <organismsDiffer>false</organismsDiffer>
    <experiments>3</experiments>
</comment>
<comment type="interaction">
    <interactant intactId="EBI-14104088">
        <id>Q53FD0-2</id>
    </interactant>
    <interactant intactId="EBI-928842">
        <id>Q9GZM8</id>
        <label>NDEL1</label>
    </interactant>
    <organismsDiffer>false</organismsDiffer>
    <experiments>3</experiments>
</comment>
<comment type="interaction">
    <interactant intactId="EBI-14104088">
        <id>Q53FD0-2</id>
    </interactant>
    <interactant intactId="EBI-10249760">
        <id>Q9UHB4</id>
        <label>NDOR1</label>
    </interactant>
    <organismsDiffer>false</organismsDiffer>
    <experiments>3</experiments>
</comment>
<comment type="interaction">
    <interactant intactId="EBI-14104088">
        <id>Q53FD0-2</id>
    </interactant>
    <interactant intactId="EBI-10178578">
        <id>I6L9F6</id>
        <label>NEFL</label>
    </interactant>
    <organismsDiffer>false</organismsDiffer>
    <experiments>3</experiments>
</comment>
<comment type="interaction">
    <interactant intactId="EBI-14104088">
        <id>Q53FD0-2</id>
    </interactant>
    <interactant intactId="EBI-475646">
        <id>P07196</id>
        <label>NEFL</label>
    </interactant>
    <organismsDiffer>false</organismsDiffer>
    <experiments>3</experiments>
</comment>
<comment type="interaction">
    <interactant intactId="EBI-14104088">
        <id>Q53FD0-2</id>
    </interactant>
    <interactant intactId="EBI-11750983">
        <id>Q9HC98-4</id>
        <label>NEK6</label>
    </interactant>
    <organismsDiffer>false</organismsDiffer>
    <experiments>3</experiments>
</comment>
<comment type="interaction">
    <interactant intactId="EBI-14104088">
        <id>Q53FD0-2</id>
    </interactant>
    <interactant intactId="EBI-12025760">
        <id>Q86UR1-2</id>
        <label>NOXA1</label>
    </interactant>
    <organismsDiffer>false</organismsDiffer>
    <experiments>3</experiments>
</comment>
<comment type="interaction">
    <interactant intactId="EBI-14104088">
        <id>Q53FD0-2</id>
    </interactant>
    <interactant intactId="EBI-741158">
        <id>Q96HA8</id>
        <label>NTAQ1</label>
    </interactant>
    <organismsDiffer>false</organismsDiffer>
    <experiments>3</experiments>
</comment>
<comment type="interaction">
    <interactant intactId="EBI-14104088">
        <id>Q53FD0-2</id>
    </interactant>
    <interactant intactId="EBI-9057006">
        <id>Q9UJX0</id>
        <label>OSGIN1</label>
    </interactant>
    <organismsDiffer>false</organismsDiffer>
    <experiments>3</experiments>
</comment>
<comment type="interaction">
    <interactant intactId="EBI-14104088">
        <id>Q53FD0-2</id>
    </interactant>
    <interactant intactId="EBI-357275">
        <id>Q99471</id>
        <label>PFDN5</label>
    </interactant>
    <organismsDiffer>false</organismsDiffer>
    <experiments>3</experiments>
</comment>
<comment type="interaction">
    <interactant intactId="EBI-14104088">
        <id>Q53FD0-2</id>
    </interactant>
    <interactant intactId="EBI-14066006">
        <id>Q4G0R1</id>
        <label>PIBF1</label>
    </interactant>
    <organismsDiffer>false</organismsDiffer>
    <experiments>3</experiments>
</comment>
<comment type="interaction">
    <interactant intactId="EBI-14104088">
        <id>Q53FD0-2</id>
    </interactant>
    <interactant intactId="EBI-1055079">
        <id>O15160</id>
        <label>POLR1C</label>
    </interactant>
    <organismsDiffer>false</organismsDiffer>
    <experiments>3</experiments>
</comment>
<comment type="interaction">
    <interactant intactId="EBI-14104088">
        <id>Q53FD0-2</id>
    </interactant>
    <interactant intactId="EBI-25884072">
        <id>P62937-2</id>
        <label>PPIA</label>
    </interactant>
    <organismsDiffer>false</organismsDiffer>
    <experiments>3</experiments>
</comment>
<comment type="interaction">
    <interactant intactId="EBI-14104088">
        <id>Q53FD0-2</id>
    </interactant>
    <interactant intactId="EBI-1053424">
        <id>O43741</id>
        <label>PRKAB2</label>
    </interactant>
    <organismsDiffer>false</organismsDiffer>
    <experiments>3</experiments>
</comment>
<comment type="interaction">
    <interactant intactId="EBI-14104088">
        <id>Q53FD0-2</id>
    </interactant>
    <interactant intactId="EBI-752074">
        <id>P41219</id>
        <label>PRPH</label>
    </interactant>
    <organismsDiffer>false</organismsDiffer>
    <experiments>3</experiments>
</comment>
<comment type="interaction">
    <interactant intactId="EBI-14104088">
        <id>Q53FD0-2</id>
    </interactant>
    <interactant intactId="EBI-1050964">
        <id>O43586</id>
        <label>PSTPIP1</label>
    </interactant>
    <organismsDiffer>false</organismsDiffer>
    <experiments>3</experiments>
</comment>
<comment type="interaction">
    <interactant intactId="EBI-14104088">
        <id>Q53FD0-2</id>
    </interactant>
    <interactant intactId="EBI-1055693">
        <id>O75771</id>
        <label>RAD51D</label>
    </interactant>
    <organismsDiffer>false</organismsDiffer>
    <experiments>3</experiments>
</comment>
<comment type="interaction">
    <interactant intactId="EBI-14104088">
        <id>Q53FD0-2</id>
    </interactant>
    <interactant intactId="EBI-286642">
        <id>P62826</id>
        <label>RAN</label>
    </interactant>
    <organismsDiffer>false</organismsDiffer>
    <experiments>3</experiments>
</comment>
<comment type="interaction">
    <interactant intactId="EBI-14104088">
        <id>Q53FD0-2</id>
    </interactant>
    <interactant intactId="EBI-726876">
        <id>Q6NUQ1</id>
        <label>RINT1</label>
    </interactant>
    <organismsDiffer>false</organismsDiffer>
    <experiments>3</experiments>
</comment>
<comment type="interaction">
    <interactant intactId="EBI-14104088">
        <id>Q53FD0-2</id>
    </interactant>
    <interactant intactId="EBI-396669">
        <id>Q9Y3C5</id>
        <label>RNF11</label>
    </interactant>
    <organismsDiffer>false</organismsDiffer>
    <experiments>3</experiments>
</comment>
<comment type="interaction">
    <interactant intactId="EBI-14104088">
        <id>Q53FD0-2</id>
    </interactant>
    <interactant intactId="EBI-9090795">
        <id>Q15047-2</id>
        <label>SETDB1</label>
    </interactant>
    <organismsDiffer>false</organismsDiffer>
    <experiments>3</experiments>
</comment>
<comment type="interaction">
    <interactant intactId="EBI-14104088">
        <id>Q53FD0-2</id>
    </interactant>
    <interactant intactId="EBI-2623095">
        <id>Q9Y371</id>
        <label>SH3GLB1</label>
    </interactant>
    <organismsDiffer>false</organismsDiffer>
    <experiments>3</experiments>
</comment>
<comment type="interaction">
    <interactant intactId="EBI-14104088">
        <id>Q53FD0-2</id>
    </interactant>
    <interactant intactId="EBI-1773646">
        <id>Q9BRV8</id>
        <label>SIKE1</label>
    </interactant>
    <organismsDiffer>false</organismsDiffer>
    <experiments>6</experiments>
</comment>
<comment type="interaction">
    <interactant intactId="EBI-14104088">
        <id>Q53FD0-2</id>
    </interactant>
    <interactant intactId="EBI-358489">
        <id>Q96GM5</id>
        <label>SMARCD1</label>
    </interactant>
    <organismsDiffer>false</organismsDiffer>
    <experiments>3</experiments>
</comment>
<comment type="interaction">
    <interactant intactId="EBI-14104088">
        <id>Q53FD0-2</id>
    </interactant>
    <interactant intactId="EBI-741237">
        <id>O60504</id>
        <label>SORBS3</label>
    </interactant>
    <organismsDiffer>false</organismsDiffer>
    <experiments>3</experiments>
</comment>
<comment type="interaction">
    <interactant intactId="EBI-14104088">
        <id>Q53FD0-2</id>
    </interactant>
    <interactant intactId="EBI-12076664">
        <id>O14787-2</id>
        <label>TNPO2</label>
    </interactant>
    <organismsDiffer>false</organismsDiffer>
    <experiments>3</experiments>
</comment>
<comment type="interaction">
    <interactant intactId="EBI-14104088">
        <id>Q53FD0-2</id>
    </interactant>
    <interactant intactId="EBI-355744">
        <id>Q12933</id>
        <label>TRAF2</label>
    </interactant>
    <organismsDiffer>false</organismsDiffer>
    <experiments>3</experiments>
</comment>
<comment type="interaction">
    <interactant intactId="EBI-14104088">
        <id>Q53FD0-2</id>
    </interactant>
    <interactant intactId="EBI-740098">
        <id>P36406</id>
        <label>TRIM23</label>
    </interactant>
    <organismsDiffer>false</organismsDiffer>
    <experiments>3</experiments>
</comment>
<comment type="interaction">
    <interactant intactId="EBI-14104088">
        <id>Q53FD0-2</id>
    </interactant>
    <interactant intactId="EBI-7353612">
        <id>P57075-2</id>
        <label>UBASH3A</label>
    </interactant>
    <organismsDiffer>false</organismsDiffer>
    <experiments>3</experiments>
</comment>
<comment type="interaction">
    <interactant intactId="EBI-14104088">
        <id>Q53FD0-2</id>
    </interactant>
    <interactant intactId="EBI-741480">
        <id>Q9UMX0</id>
        <label>UBQLN1</label>
    </interactant>
    <organismsDiffer>false</organismsDiffer>
    <experiments>3</experiments>
</comment>
<comment type="interaction">
    <interactant intactId="EBI-14104088">
        <id>Q53FD0-2</id>
    </interactant>
    <interactant intactId="EBI-2799833">
        <id>Q8N1B4</id>
        <label>VPS52</label>
    </interactant>
    <organismsDiffer>false</organismsDiffer>
    <experiments>3</experiments>
</comment>
<comment type="interaction">
    <interactant intactId="EBI-14104088">
        <id>Q53FD0-2</id>
    </interactant>
    <interactant intactId="EBI-720609">
        <id>O76024</id>
        <label>WFS1</label>
    </interactant>
    <organismsDiffer>false</organismsDiffer>
    <experiments>3</experiments>
</comment>
<comment type="interaction">
    <interactant intactId="EBI-14104088">
        <id>Q53FD0-2</id>
    </interactant>
    <interactant intactId="EBI-359832">
        <id>P61981</id>
        <label>YWHAG</label>
    </interactant>
    <organismsDiffer>false</organismsDiffer>
    <experiments>3</experiments>
</comment>
<comment type="interaction">
    <interactant intactId="EBI-14104088">
        <id>Q53FD0-2</id>
    </interactant>
    <interactant intactId="EBI-625509">
        <id>Q8N720</id>
        <label>ZNF655</label>
    </interactant>
    <organismsDiffer>false</organismsDiffer>
    <experiments>5</experiments>
</comment>
<comment type="interaction">
    <interactant intactId="EBI-14104088">
        <id>Q53FD0-2</id>
    </interactant>
    <interactant intactId="EBI-7254550">
        <id>P36508</id>
        <label>ZNF76</label>
    </interactant>
    <organismsDiffer>false</organismsDiffer>
    <experiments>3</experiments>
</comment>
<comment type="interaction">
    <interactant intactId="EBI-14104088">
        <id>Q53FD0-2</id>
    </interactant>
    <interactant intactId="EBI-25900580">
        <id>Q9Y649</id>
    </interactant>
    <organismsDiffer>false</organismsDiffer>
    <experiments>3</experiments>
</comment>
<comment type="alternative products">
    <event type="alternative splicing"/>
    <isoform>
        <id>Q53FD0-1</id>
        <name>1</name>
        <sequence type="displayed"/>
    </isoform>
    <isoform>
        <id>Q53FD0-2</id>
        <name>2</name>
        <sequence type="described" ref="VSP_043105"/>
    </isoform>
</comment>
<comment type="similarity">
    <text evidence="7">Belongs to the ZC2HC1 family.</text>
</comment>
<comment type="sequence caution" evidence="7">
    <conflict type="frameshift">
        <sequence resource="EMBL-CDS" id="BAB15541"/>
    </conflict>
</comment>